<name>Y1542_BACAN</name>
<reference key="1">
    <citation type="journal article" date="2003" name="Nature">
        <title>The genome sequence of Bacillus anthracis Ames and comparison to closely related bacteria.</title>
        <authorList>
            <person name="Read T.D."/>
            <person name="Peterson S.N."/>
            <person name="Tourasse N.J."/>
            <person name="Baillie L.W."/>
            <person name="Paulsen I.T."/>
            <person name="Nelson K.E."/>
            <person name="Tettelin H."/>
            <person name="Fouts D.E."/>
            <person name="Eisen J.A."/>
            <person name="Gill S.R."/>
            <person name="Holtzapple E.K."/>
            <person name="Okstad O.A."/>
            <person name="Helgason E."/>
            <person name="Rilstone J."/>
            <person name="Wu M."/>
            <person name="Kolonay J.F."/>
            <person name="Beanan M.J."/>
            <person name="Dodson R.J."/>
            <person name="Brinkac L.M."/>
            <person name="Gwinn M.L."/>
            <person name="DeBoy R.T."/>
            <person name="Madpu R."/>
            <person name="Daugherty S.C."/>
            <person name="Durkin A.S."/>
            <person name="Haft D.H."/>
            <person name="Nelson W.C."/>
            <person name="Peterson J.D."/>
            <person name="Pop M."/>
            <person name="Khouri H.M."/>
            <person name="Radune D."/>
            <person name="Benton J.L."/>
            <person name="Mahamoud Y."/>
            <person name="Jiang L."/>
            <person name="Hance I.R."/>
            <person name="Weidman J.F."/>
            <person name="Berry K.J."/>
            <person name="Plaut R.D."/>
            <person name="Wolf A.M."/>
            <person name="Watkins K.L."/>
            <person name="Nierman W.C."/>
            <person name="Hazen A."/>
            <person name="Cline R.T."/>
            <person name="Redmond C."/>
            <person name="Thwaite J.E."/>
            <person name="White O."/>
            <person name="Salzberg S.L."/>
            <person name="Thomason B."/>
            <person name="Friedlander A.M."/>
            <person name="Koehler T.M."/>
            <person name="Hanna P.C."/>
            <person name="Kolstoe A.-B."/>
            <person name="Fraser C.M."/>
        </authorList>
    </citation>
    <scope>NUCLEOTIDE SEQUENCE [LARGE SCALE GENOMIC DNA]</scope>
    <source>
        <strain>Ames / isolate Porton</strain>
    </source>
</reference>
<reference key="2">
    <citation type="journal article" date="2009" name="J. Bacteriol.">
        <title>The complete genome sequence of Bacillus anthracis Ames 'Ancestor'.</title>
        <authorList>
            <person name="Ravel J."/>
            <person name="Jiang L."/>
            <person name="Stanley S.T."/>
            <person name="Wilson M.R."/>
            <person name="Decker R.S."/>
            <person name="Read T.D."/>
            <person name="Worsham P."/>
            <person name="Keim P.S."/>
            <person name="Salzberg S.L."/>
            <person name="Fraser-Liggett C.M."/>
            <person name="Rasko D.A."/>
        </authorList>
    </citation>
    <scope>NUCLEOTIDE SEQUENCE [LARGE SCALE GENOMIC DNA]</scope>
    <source>
        <strain>Ames ancestor</strain>
    </source>
</reference>
<reference key="3">
    <citation type="submission" date="2004-01" db="EMBL/GenBank/DDBJ databases">
        <title>Complete genome sequence of Bacillus anthracis Sterne.</title>
        <authorList>
            <person name="Brettin T.S."/>
            <person name="Bruce D."/>
            <person name="Challacombe J.F."/>
            <person name="Gilna P."/>
            <person name="Han C."/>
            <person name="Hill K."/>
            <person name="Hitchcock P."/>
            <person name="Jackson P."/>
            <person name="Keim P."/>
            <person name="Longmire J."/>
            <person name="Lucas S."/>
            <person name="Okinaka R."/>
            <person name="Richardson P."/>
            <person name="Rubin E."/>
            <person name="Tice H."/>
        </authorList>
    </citation>
    <scope>NUCLEOTIDE SEQUENCE [LARGE SCALE GENOMIC DNA]</scope>
    <source>
        <strain>Sterne</strain>
    </source>
</reference>
<proteinExistence type="evidence at protein level"/>
<sequence>MNTPVSVNEKKDFVKWFLNNYQLKQRECVWILNYLMSHDQLMHKVHFVEHAKYCPRGLVMSANCVKDTPFHFFKQNVMTTDAEKSFHDIRLNRDEDIYIQLNFKSSFQNANYVAVLEENPYLPKHIEVNEKDRLLAERFLEESVFSFRRERLLKQIDEALDKQDKEAFHRLTAELKML</sequence>
<organism>
    <name type="scientific">Bacillus anthracis</name>
    <dbReference type="NCBI Taxonomy" id="1392"/>
    <lineage>
        <taxon>Bacteria</taxon>
        <taxon>Bacillati</taxon>
        <taxon>Bacillota</taxon>
        <taxon>Bacilli</taxon>
        <taxon>Bacillales</taxon>
        <taxon>Bacillaceae</taxon>
        <taxon>Bacillus</taxon>
        <taxon>Bacillus cereus group</taxon>
    </lineage>
</organism>
<keyword id="KW-0002">3D-structure</keyword>
<keyword id="KW-1185">Reference proteome</keyword>
<feature type="chain" id="PRO_0000216094" description="UPF0302 protein BA_1542/GBAA_1542/BAS1430">
    <location>
        <begin position="1"/>
        <end position="178"/>
    </location>
</feature>
<feature type="helix" evidence="2">
    <location>
        <begin position="7"/>
        <end position="20"/>
    </location>
</feature>
<feature type="strand" evidence="2">
    <location>
        <begin position="23"/>
        <end position="25"/>
    </location>
</feature>
<feature type="helix" evidence="2">
    <location>
        <begin position="27"/>
        <end position="37"/>
    </location>
</feature>
<feature type="turn" evidence="2">
    <location>
        <begin position="39"/>
        <end position="44"/>
    </location>
</feature>
<feature type="strand" evidence="2">
    <location>
        <begin position="45"/>
        <end position="47"/>
    </location>
</feature>
<feature type="helix" evidence="2">
    <location>
        <begin position="51"/>
        <end position="53"/>
    </location>
</feature>
<feature type="strand" evidence="2">
    <location>
        <begin position="56"/>
        <end position="65"/>
    </location>
</feature>
<feature type="strand" evidence="2">
    <location>
        <begin position="69"/>
        <end position="76"/>
    </location>
</feature>
<feature type="helix" evidence="2">
    <location>
        <begin position="82"/>
        <end position="92"/>
    </location>
</feature>
<feature type="strand" evidence="2">
    <location>
        <begin position="97"/>
        <end position="102"/>
    </location>
</feature>
<feature type="helix" evidence="2">
    <location>
        <begin position="106"/>
        <end position="108"/>
    </location>
</feature>
<feature type="helix" evidence="2">
    <location>
        <begin position="110"/>
        <end position="115"/>
    </location>
</feature>
<feature type="turn" evidence="2">
    <location>
        <begin position="129"/>
        <end position="133"/>
    </location>
</feature>
<feature type="helix" evidence="2">
    <location>
        <begin position="136"/>
        <end position="161"/>
    </location>
</feature>
<feature type="helix" evidence="2">
    <location>
        <begin position="165"/>
        <end position="178"/>
    </location>
</feature>
<dbReference type="EMBL" id="AE016879">
    <property type="protein sequence ID" value="AAP25478.1"/>
    <property type="molecule type" value="Genomic_DNA"/>
</dbReference>
<dbReference type="EMBL" id="AE017334">
    <property type="protein sequence ID" value="AAT30639.1"/>
    <property type="molecule type" value="Genomic_DNA"/>
</dbReference>
<dbReference type="EMBL" id="AE017225">
    <property type="protein sequence ID" value="AAT53750.1"/>
    <property type="molecule type" value="Genomic_DNA"/>
</dbReference>
<dbReference type="RefSeq" id="NP_843992.1">
    <property type="nucleotide sequence ID" value="NC_003997.3"/>
</dbReference>
<dbReference type="RefSeq" id="WP_001095923.1">
    <property type="nucleotide sequence ID" value="NZ_WXXJ01000001.1"/>
</dbReference>
<dbReference type="RefSeq" id="YP_027699.1">
    <property type="nucleotide sequence ID" value="NC_005945.1"/>
</dbReference>
<dbReference type="PDB" id="3DO9">
    <property type="method" value="X-ray"/>
    <property type="resolution" value="2.75 A"/>
    <property type="chains" value="A/B/C=2-178"/>
</dbReference>
<dbReference type="PDBsum" id="3DO9"/>
<dbReference type="SMR" id="Q81SV3"/>
<dbReference type="STRING" id="261594.GBAA_1542"/>
<dbReference type="DNASU" id="1083691"/>
<dbReference type="KEGG" id="ban:BA_1542"/>
<dbReference type="KEGG" id="bar:GBAA_1542"/>
<dbReference type="KEGG" id="bat:BAS1430"/>
<dbReference type="PATRIC" id="fig|198094.11.peg.1513"/>
<dbReference type="eggNOG" id="COG5582">
    <property type="taxonomic scope" value="Bacteria"/>
</dbReference>
<dbReference type="HOGENOM" id="CLU_126019_0_0_9"/>
<dbReference type="OMA" id="RRECAWL"/>
<dbReference type="OrthoDB" id="2155814at2"/>
<dbReference type="EvolutionaryTrace" id="Q81SV3"/>
<dbReference type="Proteomes" id="UP000000427">
    <property type="component" value="Chromosome"/>
</dbReference>
<dbReference type="Proteomes" id="UP000000594">
    <property type="component" value="Chromosome"/>
</dbReference>
<dbReference type="Gene3D" id="3.40.1530.30">
    <property type="entry name" value="Uncharacterised family UPF0302, N-terminal domain"/>
    <property type="match status" value="1"/>
</dbReference>
<dbReference type="Gene3D" id="4.10.810.10">
    <property type="entry name" value="Virus Scaffolding Protein, Chain A"/>
    <property type="match status" value="1"/>
</dbReference>
<dbReference type="HAMAP" id="MF_00760">
    <property type="entry name" value="UPF0302"/>
    <property type="match status" value="1"/>
</dbReference>
<dbReference type="InterPro" id="IPR014957">
    <property type="entry name" value="IDEAL_dom"/>
</dbReference>
<dbReference type="InterPro" id="IPR011188">
    <property type="entry name" value="UPF0302"/>
</dbReference>
<dbReference type="InterPro" id="IPR014963">
    <property type="entry name" value="UPF0302_N"/>
</dbReference>
<dbReference type="InterPro" id="IPR038091">
    <property type="entry name" value="UPF0302_N_sf"/>
</dbReference>
<dbReference type="InterPro" id="IPR027393">
    <property type="entry name" value="Virus_scaffolding_prot_C"/>
</dbReference>
<dbReference type="NCBIfam" id="NF002965">
    <property type="entry name" value="PRK03636.1"/>
    <property type="match status" value="1"/>
</dbReference>
<dbReference type="Pfam" id="PF08858">
    <property type="entry name" value="IDEAL"/>
    <property type="match status" value="1"/>
</dbReference>
<dbReference type="Pfam" id="PF08864">
    <property type="entry name" value="UPF0302"/>
    <property type="match status" value="1"/>
</dbReference>
<dbReference type="PIRSF" id="PIRSF007165">
    <property type="entry name" value="UCP007165"/>
    <property type="match status" value="1"/>
</dbReference>
<dbReference type="SMART" id="SM00914">
    <property type="entry name" value="IDEAL"/>
    <property type="match status" value="1"/>
</dbReference>
<evidence type="ECO:0000255" key="1">
    <source>
        <dbReference type="HAMAP-Rule" id="MF_00760"/>
    </source>
</evidence>
<evidence type="ECO:0007829" key="2">
    <source>
        <dbReference type="PDB" id="3DO9"/>
    </source>
</evidence>
<gene>
    <name type="ordered locus">BA_1542</name>
    <name type="ordered locus">GBAA_1542</name>
    <name type="ordered locus">BAS1430</name>
</gene>
<comment type="similarity">
    <text evidence="1">Belongs to the UPF0302 family.</text>
</comment>
<protein>
    <recommendedName>
        <fullName evidence="1">UPF0302 protein BA_1542/GBAA_1542/BAS1430</fullName>
    </recommendedName>
</protein>
<accession>Q81SV3</accession>
<accession>Q6I132</accession>
<accession>Q6KUY6</accession>